<proteinExistence type="predicted"/>
<reference key="1">
    <citation type="journal article" date="1992" name="Mol. Microbiol.">
        <title>Genes and their organization in the replication origin region of the bacterial chromosome.</title>
        <authorList>
            <person name="Ogasawara N."/>
            <person name="Yoshikawa H."/>
        </authorList>
    </citation>
    <scope>NUCLEOTIDE SEQUENCE [GENOMIC DNA]</scope>
    <source>
        <strain>168 / CRK2000</strain>
    </source>
</reference>
<reference key="2">
    <citation type="journal article" date="1994" name="DNA Res.">
        <title>Systematic sequencing of the 180 kilobase region of the Bacillus subtilis chromosome containing the replication origin.</title>
        <authorList>
            <person name="Ogasawara N."/>
            <person name="Nakai S."/>
            <person name="Yoshikawa H."/>
        </authorList>
    </citation>
    <scope>NUCLEOTIDE SEQUENCE [GENOMIC DNA]</scope>
    <source>
        <strain>168</strain>
    </source>
</reference>
<reference key="3">
    <citation type="journal article" date="1997" name="Nature">
        <title>The complete genome sequence of the Gram-positive bacterium Bacillus subtilis.</title>
        <authorList>
            <person name="Kunst F."/>
            <person name="Ogasawara N."/>
            <person name="Moszer I."/>
            <person name="Albertini A.M."/>
            <person name="Alloni G."/>
            <person name="Azevedo V."/>
            <person name="Bertero M.G."/>
            <person name="Bessieres P."/>
            <person name="Bolotin A."/>
            <person name="Borchert S."/>
            <person name="Borriss R."/>
            <person name="Boursier L."/>
            <person name="Brans A."/>
            <person name="Braun M."/>
            <person name="Brignell S.C."/>
            <person name="Bron S."/>
            <person name="Brouillet S."/>
            <person name="Bruschi C.V."/>
            <person name="Caldwell B."/>
            <person name="Capuano V."/>
            <person name="Carter N.M."/>
            <person name="Choi S.-K."/>
            <person name="Codani J.-J."/>
            <person name="Connerton I.F."/>
            <person name="Cummings N.J."/>
            <person name="Daniel R.A."/>
            <person name="Denizot F."/>
            <person name="Devine K.M."/>
            <person name="Duesterhoeft A."/>
            <person name="Ehrlich S.D."/>
            <person name="Emmerson P.T."/>
            <person name="Entian K.-D."/>
            <person name="Errington J."/>
            <person name="Fabret C."/>
            <person name="Ferrari E."/>
            <person name="Foulger D."/>
            <person name="Fritz C."/>
            <person name="Fujita M."/>
            <person name="Fujita Y."/>
            <person name="Fuma S."/>
            <person name="Galizzi A."/>
            <person name="Galleron N."/>
            <person name="Ghim S.-Y."/>
            <person name="Glaser P."/>
            <person name="Goffeau A."/>
            <person name="Golightly E.J."/>
            <person name="Grandi G."/>
            <person name="Guiseppi G."/>
            <person name="Guy B.J."/>
            <person name="Haga K."/>
            <person name="Haiech J."/>
            <person name="Harwood C.R."/>
            <person name="Henaut A."/>
            <person name="Hilbert H."/>
            <person name="Holsappel S."/>
            <person name="Hosono S."/>
            <person name="Hullo M.-F."/>
            <person name="Itaya M."/>
            <person name="Jones L.-M."/>
            <person name="Joris B."/>
            <person name="Karamata D."/>
            <person name="Kasahara Y."/>
            <person name="Klaerr-Blanchard M."/>
            <person name="Klein C."/>
            <person name="Kobayashi Y."/>
            <person name="Koetter P."/>
            <person name="Koningstein G."/>
            <person name="Krogh S."/>
            <person name="Kumano M."/>
            <person name="Kurita K."/>
            <person name="Lapidus A."/>
            <person name="Lardinois S."/>
            <person name="Lauber J."/>
            <person name="Lazarevic V."/>
            <person name="Lee S.-M."/>
            <person name="Levine A."/>
            <person name="Liu H."/>
            <person name="Masuda S."/>
            <person name="Mauel C."/>
            <person name="Medigue C."/>
            <person name="Medina N."/>
            <person name="Mellado R.P."/>
            <person name="Mizuno M."/>
            <person name="Moestl D."/>
            <person name="Nakai S."/>
            <person name="Noback M."/>
            <person name="Noone D."/>
            <person name="O'Reilly M."/>
            <person name="Ogawa K."/>
            <person name="Ogiwara A."/>
            <person name="Oudega B."/>
            <person name="Park S.-H."/>
            <person name="Parro V."/>
            <person name="Pohl T.M."/>
            <person name="Portetelle D."/>
            <person name="Porwollik S."/>
            <person name="Prescott A.M."/>
            <person name="Presecan E."/>
            <person name="Pujic P."/>
            <person name="Purnelle B."/>
            <person name="Rapoport G."/>
            <person name="Rey M."/>
            <person name="Reynolds S."/>
            <person name="Rieger M."/>
            <person name="Rivolta C."/>
            <person name="Rocha E."/>
            <person name="Roche B."/>
            <person name="Rose M."/>
            <person name="Sadaie Y."/>
            <person name="Sato T."/>
            <person name="Scanlan E."/>
            <person name="Schleich S."/>
            <person name="Schroeter R."/>
            <person name="Scoffone F."/>
            <person name="Sekiguchi J."/>
            <person name="Sekowska A."/>
            <person name="Seror S.J."/>
            <person name="Serror P."/>
            <person name="Shin B.-S."/>
            <person name="Soldo B."/>
            <person name="Sorokin A."/>
            <person name="Tacconi E."/>
            <person name="Takagi T."/>
            <person name="Takahashi H."/>
            <person name="Takemaru K."/>
            <person name="Takeuchi M."/>
            <person name="Tamakoshi A."/>
            <person name="Tanaka T."/>
            <person name="Terpstra P."/>
            <person name="Tognoni A."/>
            <person name="Tosato V."/>
            <person name="Uchiyama S."/>
            <person name="Vandenbol M."/>
            <person name="Vannier F."/>
            <person name="Vassarotti A."/>
            <person name="Viari A."/>
            <person name="Wambutt R."/>
            <person name="Wedler E."/>
            <person name="Wedler H."/>
            <person name="Weitzenegger T."/>
            <person name="Winters P."/>
            <person name="Wipat A."/>
            <person name="Yamamoto H."/>
            <person name="Yamane K."/>
            <person name="Yasumoto K."/>
            <person name="Yata K."/>
            <person name="Yoshida K."/>
            <person name="Yoshikawa H.-F."/>
            <person name="Zumstein E."/>
            <person name="Yoshikawa H."/>
            <person name="Danchin A."/>
        </authorList>
    </citation>
    <scope>NUCLEOTIDE SEQUENCE [LARGE SCALE GENOMIC DNA]</scope>
    <source>
        <strain>168</strain>
    </source>
</reference>
<sequence>MNRKGGLFSSQERVKQYVSHTDAAAAKQIQTILSSSLRKAAGKPIVVVCIGTDRSTGDSLGPLVGMKLKQMQLTRFHVYGTLSDPVHAVNMKDKINDIHKLHKNPFVIAVDACLGRVKSVGSFQIGDGPLKPGAGVQKDLPEVGDLHINGIVNVSGFMEYFVLQNTRLNLVMNMANVLAEGLSLTDRTEWRQERLNPLQRLTGRI</sequence>
<organism>
    <name type="scientific">Bacillus subtilis (strain 168)</name>
    <dbReference type="NCBI Taxonomy" id="224308"/>
    <lineage>
        <taxon>Bacteria</taxon>
        <taxon>Bacillati</taxon>
        <taxon>Bacillota</taxon>
        <taxon>Bacilli</taxon>
        <taxon>Bacillales</taxon>
        <taxon>Bacillaceae</taxon>
        <taxon>Bacillus</taxon>
    </lineage>
</organism>
<keyword id="KW-1185">Reference proteome</keyword>
<name>YYAC_BACSU</name>
<feature type="chain" id="PRO_0000050049" description="Uncharacterized protein YyaC">
    <location>
        <begin position="1"/>
        <end position="205"/>
    </location>
</feature>
<dbReference type="EMBL" id="X62539">
    <property type="protein sequence ID" value="CAA44410.1"/>
    <property type="molecule type" value="Genomic_DNA"/>
</dbReference>
<dbReference type="EMBL" id="D26185">
    <property type="protein sequence ID" value="BAA05225.1"/>
    <property type="molecule type" value="Genomic_DNA"/>
</dbReference>
<dbReference type="EMBL" id="AL009126">
    <property type="protein sequence ID" value="CAB16132.1"/>
    <property type="molecule type" value="Genomic_DNA"/>
</dbReference>
<dbReference type="PIR" id="I40446">
    <property type="entry name" value="I40446"/>
</dbReference>
<dbReference type="RefSeq" id="WP_003243890.1">
    <property type="nucleotide sequence ID" value="NZ_OZ025638.1"/>
</dbReference>
<dbReference type="FunCoup" id="P37521">
    <property type="interactions" value="70"/>
</dbReference>
<dbReference type="STRING" id="224308.BSU40950"/>
<dbReference type="PaxDb" id="224308-BSU40950"/>
<dbReference type="EnsemblBacteria" id="CAB16132">
    <property type="protein sequence ID" value="CAB16132"/>
    <property type="gene ID" value="BSU_40950"/>
</dbReference>
<dbReference type="GeneID" id="937925"/>
<dbReference type="KEGG" id="bsu:BSU40950"/>
<dbReference type="PATRIC" id="fig|224308.179.peg.4437"/>
<dbReference type="eggNOG" id="ENOG50313RY">
    <property type="taxonomic scope" value="Bacteria"/>
</dbReference>
<dbReference type="InParanoid" id="P37521"/>
<dbReference type="OrthoDB" id="9815953at2"/>
<dbReference type="PhylomeDB" id="P37521"/>
<dbReference type="BioCyc" id="BSUB:BSU40950-MONOMER"/>
<dbReference type="Proteomes" id="UP000001570">
    <property type="component" value="Chromosome"/>
</dbReference>
<dbReference type="InterPro" id="IPR023430">
    <property type="entry name" value="Pept_HybD-like_dom_sf"/>
</dbReference>
<dbReference type="InterPro" id="IPR009665">
    <property type="entry name" value="YyaC"/>
</dbReference>
<dbReference type="NCBIfam" id="TIGR02841">
    <property type="entry name" value="spore_YyaC"/>
    <property type="match status" value="1"/>
</dbReference>
<dbReference type="Pfam" id="PF06866">
    <property type="entry name" value="DUF1256"/>
    <property type="match status" value="1"/>
</dbReference>
<dbReference type="SUPFAM" id="SSF53163">
    <property type="entry name" value="HybD-like"/>
    <property type="match status" value="1"/>
</dbReference>
<gene>
    <name type="primary">yyaC</name>
    <name type="ordered locus">BSU40950</name>
</gene>
<protein>
    <recommendedName>
        <fullName>Uncharacterized protein YyaC</fullName>
    </recommendedName>
</protein>
<accession>P37521</accession>